<keyword id="KW-0687">Ribonucleoprotein</keyword>
<keyword id="KW-0689">Ribosomal protein</keyword>
<feature type="chain" id="PRO_1000013294" description="Large ribosomal subunit protein bL34">
    <location>
        <begin position="1"/>
        <end position="44"/>
    </location>
</feature>
<gene>
    <name evidence="1" type="primary">rpmH</name>
    <name type="ordered locus">Bcen2424_3166</name>
</gene>
<organism>
    <name type="scientific">Burkholderia cenocepacia (strain HI2424)</name>
    <dbReference type="NCBI Taxonomy" id="331272"/>
    <lineage>
        <taxon>Bacteria</taxon>
        <taxon>Pseudomonadati</taxon>
        <taxon>Pseudomonadota</taxon>
        <taxon>Betaproteobacteria</taxon>
        <taxon>Burkholderiales</taxon>
        <taxon>Burkholderiaceae</taxon>
        <taxon>Burkholderia</taxon>
        <taxon>Burkholderia cepacia complex</taxon>
    </lineage>
</organism>
<name>RL34_BURCH</name>
<accession>A0KBN6</accession>
<reference key="1">
    <citation type="submission" date="2006-08" db="EMBL/GenBank/DDBJ databases">
        <title>Complete sequence of chromosome 1 of Burkholderia cenocepacia HI2424.</title>
        <authorList>
            <person name="Copeland A."/>
            <person name="Lucas S."/>
            <person name="Lapidus A."/>
            <person name="Barry K."/>
            <person name="Detter J.C."/>
            <person name="Glavina del Rio T."/>
            <person name="Hammon N."/>
            <person name="Israni S."/>
            <person name="Pitluck S."/>
            <person name="Chain P."/>
            <person name="Malfatti S."/>
            <person name="Shin M."/>
            <person name="Vergez L."/>
            <person name="Schmutz J."/>
            <person name="Larimer F."/>
            <person name="Land M."/>
            <person name="Hauser L."/>
            <person name="Kyrpides N."/>
            <person name="Kim E."/>
            <person name="LiPuma J.J."/>
            <person name="Gonzalez C.F."/>
            <person name="Konstantinidis K."/>
            <person name="Tiedje J.M."/>
            <person name="Richardson P."/>
        </authorList>
    </citation>
    <scope>NUCLEOTIDE SEQUENCE [LARGE SCALE GENOMIC DNA]</scope>
    <source>
        <strain>HI2424</strain>
    </source>
</reference>
<comment type="similarity">
    <text evidence="1">Belongs to the bacterial ribosomal protein bL34 family.</text>
</comment>
<evidence type="ECO:0000255" key="1">
    <source>
        <dbReference type="HAMAP-Rule" id="MF_00391"/>
    </source>
</evidence>
<evidence type="ECO:0000305" key="2"/>
<dbReference type="EMBL" id="CP000458">
    <property type="protein sequence ID" value="ABK09913.1"/>
    <property type="molecule type" value="Genomic_DNA"/>
</dbReference>
<dbReference type="RefSeq" id="WP_004198824.1">
    <property type="nucleotide sequence ID" value="NC_008542.1"/>
</dbReference>
<dbReference type="SMR" id="A0KBN6"/>
<dbReference type="GeneID" id="98107775"/>
<dbReference type="KEGG" id="bch:Bcen2424_3166"/>
<dbReference type="HOGENOM" id="CLU_129938_2_0_4"/>
<dbReference type="GO" id="GO:1990904">
    <property type="term" value="C:ribonucleoprotein complex"/>
    <property type="evidence" value="ECO:0007669"/>
    <property type="project" value="UniProtKB-KW"/>
</dbReference>
<dbReference type="GO" id="GO:0005840">
    <property type="term" value="C:ribosome"/>
    <property type="evidence" value="ECO:0007669"/>
    <property type="project" value="UniProtKB-KW"/>
</dbReference>
<dbReference type="GO" id="GO:0003735">
    <property type="term" value="F:structural constituent of ribosome"/>
    <property type="evidence" value="ECO:0007669"/>
    <property type="project" value="InterPro"/>
</dbReference>
<dbReference type="GO" id="GO:0006412">
    <property type="term" value="P:translation"/>
    <property type="evidence" value="ECO:0007669"/>
    <property type="project" value="UniProtKB-UniRule"/>
</dbReference>
<dbReference type="FunFam" id="1.10.287.3980:FF:000001">
    <property type="entry name" value="Mitochondrial ribosomal protein L34"/>
    <property type="match status" value="1"/>
</dbReference>
<dbReference type="Gene3D" id="1.10.287.3980">
    <property type="match status" value="1"/>
</dbReference>
<dbReference type="HAMAP" id="MF_00391">
    <property type="entry name" value="Ribosomal_bL34"/>
    <property type="match status" value="1"/>
</dbReference>
<dbReference type="InterPro" id="IPR000271">
    <property type="entry name" value="Ribosomal_bL34"/>
</dbReference>
<dbReference type="InterPro" id="IPR020939">
    <property type="entry name" value="Ribosomal_bL34_CS"/>
</dbReference>
<dbReference type="NCBIfam" id="TIGR01030">
    <property type="entry name" value="rpmH_bact"/>
    <property type="match status" value="1"/>
</dbReference>
<dbReference type="PANTHER" id="PTHR14503:SF4">
    <property type="entry name" value="LARGE RIBOSOMAL SUBUNIT PROTEIN BL34M"/>
    <property type="match status" value="1"/>
</dbReference>
<dbReference type="PANTHER" id="PTHR14503">
    <property type="entry name" value="MITOCHONDRIAL RIBOSOMAL PROTEIN 34 FAMILY MEMBER"/>
    <property type="match status" value="1"/>
</dbReference>
<dbReference type="Pfam" id="PF00468">
    <property type="entry name" value="Ribosomal_L34"/>
    <property type="match status" value="1"/>
</dbReference>
<dbReference type="PROSITE" id="PS00784">
    <property type="entry name" value="RIBOSOMAL_L34"/>
    <property type="match status" value="1"/>
</dbReference>
<proteinExistence type="inferred from homology"/>
<sequence>MKRTYQPSVTRRKRTHGFRVRMKTAGGRKVINARRAKGRKRLAI</sequence>
<protein>
    <recommendedName>
        <fullName evidence="1">Large ribosomal subunit protein bL34</fullName>
    </recommendedName>
    <alternativeName>
        <fullName evidence="2">50S ribosomal protein L34</fullName>
    </alternativeName>
</protein>